<keyword id="KW-1185">Reference proteome</keyword>
<evidence type="ECO:0000255" key="1">
    <source>
        <dbReference type="PROSITE-ProRule" id="PRU00080"/>
    </source>
</evidence>
<evidence type="ECO:0000305" key="2"/>
<proteinExistence type="predicted"/>
<protein>
    <recommendedName>
        <fullName>Putative F-box protein At1g58310</fullName>
    </recommendedName>
</protein>
<gene>
    <name type="ordered locus">At1g58310</name>
    <name type="ORF">F19C14.7</name>
</gene>
<comment type="sequence caution" evidence="2">
    <conflict type="erroneous gene model prediction">
        <sequence resource="EMBL-CDS" id="AAF82256"/>
    </conflict>
</comment>
<name>FB65_ARATH</name>
<accession>Q9LQC1</accession>
<accession>F4IBB6</accession>
<sequence>MDFGRSRDIISGLPDSLLCHILSFLNTKEAASTSVLAKKWRYLFASVPNLDFDDSVHLRLGKRNPAVSGEDYLKMINERSDQLSTSFMDFVDQVLRLQDNSPLHKFSLKIRDCVDIVRIICWILKVLERGVSDLELDMHLKWKSSLPSKIFLSETLVRLKLSVERGPFIDVEDVHLPKLKTLHIVSVKFEKHGIGLNKLLSGCHILEELNLEYISWCLWDFVSVSLTTLKRLTFCGEVMQDENPISVSFNTPNLVYLMFTDAIADEYSTVNFDSLVEAHINLQMSEDQVEQTRFSDSEGNMEGCMVANATELIMGICNVKILYLSVYTLEVLTYCCEAIPLFNNLTHLTIESNSEVGWESVSGLLKNSPNLETLVFKGLVHRFTDKCGDMCLCKPWEEDEEEEEDEETPTCLSSCPVKVLKILEFGKIYDDEIEKRIDQVKHFLEKIPDIEQLILHYNTPVDEDVIKVYQQLRRHPKVASSKCKLQLISDNLSLSSKDCALFGID</sequence>
<reference key="1">
    <citation type="journal article" date="2000" name="Nature">
        <title>Sequence and analysis of chromosome 1 of the plant Arabidopsis thaliana.</title>
        <authorList>
            <person name="Theologis A."/>
            <person name="Ecker J.R."/>
            <person name="Palm C.J."/>
            <person name="Federspiel N.A."/>
            <person name="Kaul S."/>
            <person name="White O."/>
            <person name="Alonso J."/>
            <person name="Altafi H."/>
            <person name="Araujo R."/>
            <person name="Bowman C.L."/>
            <person name="Brooks S.Y."/>
            <person name="Buehler E."/>
            <person name="Chan A."/>
            <person name="Chao Q."/>
            <person name="Chen H."/>
            <person name="Cheuk R.F."/>
            <person name="Chin C.W."/>
            <person name="Chung M.K."/>
            <person name="Conn L."/>
            <person name="Conway A.B."/>
            <person name="Conway A.R."/>
            <person name="Creasy T.H."/>
            <person name="Dewar K."/>
            <person name="Dunn P."/>
            <person name="Etgu P."/>
            <person name="Feldblyum T.V."/>
            <person name="Feng J.-D."/>
            <person name="Fong B."/>
            <person name="Fujii C.Y."/>
            <person name="Gill J.E."/>
            <person name="Goldsmith A.D."/>
            <person name="Haas B."/>
            <person name="Hansen N.F."/>
            <person name="Hughes B."/>
            <person name="Huizar L."/>
            <person name="Hunter J.L."/>
            <person name="Jenkins J."/>
            <person name="Johnson-Hopson C."/>
            <person name="Khan S."/>
            <person name="Khaykin E."/>
            <person name="Kim C.J."/>
            <person name="Koo H.L."/>
            <person name="Kremenetskaia I."/>
            <person name="Kurtz D.B."/>
            <person name="Kwan A."/>
            <person name="Lam B."/>
            <person name="Langin-Hooper S."/>
            <person name="Lee A."/>
            <person name="Lee J.M."/>
            <person name="Lenz C.A."/>
            <person name="Li J.H."/>
            <person name="Li Y.-P."/>
            <person name="Lin X."/>
            <person name="Liu S.X."/>
            <person name="Liu Z.A."/>
            <person name="Luros J.S."/>
            <person name="Maiti R."/>
            <person name="Marziali A."/>
            <person name="Militscher J."/>
            <person name="Miranda M."/>
            <person name="Nguyen M."/>
            <person name="Nierman W.C."/>
            <person name="Osborne B.I."/>
            <person name="Pai G."/>
            <person name="Peterson J."/>
            <person name="Pham P.K."/>
            <person name="Rizzo M."/>
            <person name="Rooney T."/>
            <person name="Rowley D."/>
            <person name="Sakano H."/>
            <person name="Salzberg S.L."/>
            <person name="Schwartz J.R."/>
            <person name="Shinn P."/>
            <person name="Southwick A.M."/>
            <person name="Sun H."/>
            <person name="Tallon L.J."/>
            <person name="Tambunga G."/>
            <person name="Toriumi M.J."/>
            <person name="Town C.D."/>
            <person name="Utterback T."/>
            <person name="Van Aken S."/>
            <person name="Vaysberg M."/>
            <person name="Vysotskaia V.S."/>
            <person name="Walker M."/>
            <person name="Wu D."/>
            <person name="Yu G."/>
            <person name="Fraser C.M."/>
            <person name="Venter J.C."/>
            <person name="Davis R.W."/>
        </authorList>
    </citation>
    <scope>NUCLEOTIDE SEQUENCE [LARGE SCALE GENOMIC DNA]</scope>
    <source>
        <strain>cv. Columbia</strain>
    </source>
</reference>
<reference key="2">
    <citation type="journal article" date="2017" name="Plant J.">
        <title>Araport11: a complete reannotation of the Arabidopsis thaliana reference genome.</title>
        <authorList>
            <person name="Cheng C.Y."/>
            <person name="Krishnakumar V."/>
            <person name="Chan A.P."/>
            <person name="Thibaud-Nissen F."/>
            <person name="Schobel S."/>
            <person name="Town C.D."/>
        </authorList>
    </citation>
    <scope>GENOME REANNOTATION</scope>
    <source>
        <strain>cv. Columbia</strain>
    </source>
</reference>
<dbReference type="EMBL" id="AC008051">
    <property type="protein sequence ID" value="AAF82256.1"/>
    <property type="status" value="ALT_SEQ"/>
    <property type="molecule type" value="Genomic_DNA"/>
</dbReference>
<dbReference type="EMBL" id="CP002684">
    <property type="protein sequence ID" value="AEE33534.1"/>
    <property type="molecule type" value="Genomic_DNA"/>
</dbReference>
<dbReference type="PIR" id="G96616">
    <property type="entry name" value="G96616"/>
</dbReference>
<dbReference type="RefSeq" id="NP_176127.1">
    <property type="nucleotide sequence ID" value="NM_104611.1"/>
</dbReference>
<dbReference type="iPTMnet" id="Q9LQC1"/>
<dbReference type="PaxDb" id="3702-AT1G58310.1"/>
<dbReference type="ProteomicsDB" id="222561"/>
<dbReference type="EnsemblPlants" id="AT1G58310.1">
    <property type="protein sequence ID" value="AT1G58310.1"/>
    <property type="gene ID" value="AT1G58310"/>
</dbReference>
<dbReference type="GeneID" id="842200"/>
<dbReference type="Gramene" id="AT1G58310.1">
    <property type="protein sequence ID" value="AT1G58310.1"/>
    <property type="gene ID" value="AT1G58310"/>
</dbReference>
<dbReference type="KEGG" id="ath:AT1G58310"/>
<dbReference type="Araport" id="AT1G58310"/>
<dbReference type="TAIR" id="AT1G58310"/>
<dbReference type="eggNOG" id="ENOG502RXIZ">
    <property type="taxonomic scope" value="Eukaryota"/>
</dbReference>
<dbReference type="HOGENOM" id="CLU_010721_7_4_1"/>
<dbReference type="InParanoid" id="Q9LQC1"/>
<dbReference type="OMA" id="HINLQMS"/>
<dbReference type="OrthoDB" id="1033907at2759"/>
<dbReference type="PRO" id="PR:Q9LQC1"/>
<dbReference type="Proteomes" id="UP000006548">
    <property type="component" value="Chromosome 1"/>
</dbReference>
<dbReference type="ExpressionAtlas" id="Q9LQC1">
    <property type="expression patterns" value="baseline and differential"/>
</dbReference>
<dbReference type="CDD" id="cd22160">
    <property type="entry name" value="F-box_AtFBL13-like"/>
    <property type="match status" value="1"/>
</dbReference>
<dbReference type="Gene3D" id="1.20.1280.50">
    <property type="match status" value="1"/>
</dbReference>
<dbReference type="Gene3D" id="3.80.10.10">
    <property type="entry name" value="Ribonuclease Inhibitor"/>
    <property type="match status" value="1"/>
</dbReference>
<dbReference type="InterPro" id="IPR036047">
    <property type="entry name" value="F-box-like_dom_sf"/>
</dbReference>
<dbReference type="InterPro" id="IPR053781">
    <property type="entry name" value="F-box_AtFBL13-like"/>
</dbReference>
<dbReference type="InterPro" id="IPR001810">
    <property type="entry name" value="F-box_dom"/>
</dbReference>
<dbReference type="InterPro" id="IPR006566">
    <property type="entry name" value="FBD"/>
</dbReference>
<dbReference type="InterPro" id="IPR055294">
    <property type="entry name" value="FBL60-like"/>
</dbReference>
<dbReference type="InterPro" id="IPR032675">
    <property type="entry name" value="LRR_dom_sf"/>
</dbReference>
<dbReference type="InterPro" id="IPR055411">
    <property type="entry name" value="LRR_FXL15/At3g58940/PEG3-like"/>
</dbReference>
<dbReference type="PANTHER" id="PTHR31293">
    <property type="entry name" value="RNI-LIKE SUPERFAMILY PROTEIN"/>
    <property type="match status" value="1"/>
</dbReference>
<dbReference type="PANTHER" id="PTHR31293:SF16">
    <property type="entry name" value="RNI-LIKE SUPERFAMILY PROTEIN"/>
    <property type="match status" value="1"/>
</dbReference>
<dbReference type="Pfam" id="PF00646">
    <property type="entry name" value="F-box"/>
    <property type="match status" value="1"/>
</dbReference>
<dbReference type="Pfam" id="PF24758">
    <property type="entry name" value="LRR_At5g56370"/>
    <property type="match status" value="1"/>
</dbReference>
<dbReference type="SMART" id="SM00579">
    <property type="entry name" value="FBD"/>
    <property type="match status" value="1"/>
</dbReference>
<dbReference type="SUPFAM" id="SSF81383">
    <property type="entry name" value="F-box domain"/>
    <property type="match status" value="1"/>
</dbReference>
<dbReference type="SUPFAM" id="SSF52047">
    <property type="entry name" value="RNI-like"/>
    <property type="match status" value="1"/>
</dbReference>
<dbReference type="PROSITE" id="PS50181">
    <property type="entry name" value="FBOX"/>
    <property type="match status" value="1"/>
</dbReference>
<feature type="chain" id="PRO_0000283339" description="Putative F-box protein At1g58310">
    <location>
        <begin position="1"/>
        <end position="505"/>
    </location>
</feature>
<feature type="domain" description="F-box" evidence="1">
    <location>
        <begin position="7"/>
        <end position="55"/>
    </location>
</feature>
<organism>
    <name type="scientific">Arabidopsis thaliana</name>
    <name type="common">Mouse-ear cress</name>
    <dbReference type="NCBI Taxonomy" id="3702"/>
    <lineage>
        <taxon>Eukaryota</taxon>
        <taxon>Viridiplantae</taxon>
        <taxon>Streptophyta</taxon>
        <taxon>Embryophyta</taxon>
        <taxon>Tracheophyta</taxon>
        <taxon>Spermatophyta</taxon>
        <taxon>Magnoliopsida</taxon>
        <taxon>eudicotyledons</taxon>
        <taxon>Gunneridae</taxon>
        <taxon>Pentapetalae</taxon>
        <taxon>rosids</taxon>
        <taxon>malvids</taxon>
        <taxon>Brassicales</taxon>
        <taxon>Brassicaceae</taxon>
        <taxon>Camelineae</taxon>
        <taxon>Arabidopsis</taxon>
    </lineage>
</organism>